<evidence type="ECO:0000255" key="1">
    <source>
        <dbReference type="HAMAP-Rule" id="MF_00159"/>
    </source>
</evidence>
<organism>
    <name type="scientific">Cronobacter sakazakii (strain ATCC BAA-894)</name>
    <name type="common">Enterobacter sakazakii</name>
    <dbReference type="NCBI Taxonomy" id="290339"/>
    <lineage>
        <taxon>Bacteria</taxon>
        <taxon>Pseudomonadati</taxon>
        <taxon>Pseudomonadota</taxon>
        <taxon>Gammaproteobacteria</taxon>
        <taxon>Enterobacterales</taxon>
        <taxon>Enterobacteriaceae</taxon>
        <taxon>Cronobacter</taxon>
    </lineage>
</organism>
<feature type="chain" id="PRO_1000011465" description="4-hydroxy-3-methylbut-2-en-1-yl diphosphate synthase (flavodoxin)">
    <location>
        <begin position="1"/>
        <end position="372"/>
    </location>
</feature>
<feature type="binding site" evidence="1">
    <location>
        <position position="270"/>
    </location>
    <ligand>
        <name>[4Fe-4S] cluster</name>
        <dbReference type="ChEBI" id="CHEBI:49883"/>
    </ligand>
</feature>
<feature type="binding site" evidence="1">
    <location>
        <position position="273"/>
    </location>
    <ligand>
        <name>[4Fe-4S] cluster</name>
        <dbReference type="ChEBI" id="CHEBI:49883"/>
    </ligand>
</feature>
<feature type="binding site" evidence="1">
    <location>
        <position position="305"/>
    </location>
    <ligand>
        <name>[4Fe-4S] cluster</name>
        <dbReference type="ChEBI" id="CHEBI:49883"/>
    </ligand>
</feature>
<feature type="binding site" evidence="1">
    <location>
        <position position="312"/>
    </location>
    <ligand>
        <name>[4Fe-4S] cluster</name>
        <dbReference type="ChEBI" id="CHEBI:49883"/>
    </ligand>
</feature>
<comment type="function">
    <text evidence="1">Converts 2C-methyl-D-erythritol 2,4-cyclodiphosphate (ME-2,4cPP) into 1-hydroxy-2-methyl-2-(E)-butenyl 4-diphosphate.</text>
</comment>
<comment type="catalytic activity">
    <reaction evidence="1">
        <text>(2E)-4-hydroxy-3-methylbut-2-enyl diphosphate + oxidized [flavodoxin] + H2O + 2 H(+) = 2-C-methyl-D-erythritol 2,4-cyclic diphosphate + reduced [flavodoxin]</text>
        <dbReference type="Rhea" id="RHEA:43604"/>
        <dbReference type="Rhea" id="RHEA-COMP:10622"/>
        <dbReference type="Rhea" id="RHEA-COMP:10623"/>
        <dbReference type="ChEBI" id="CHEBI:15377"/>
        <dbReference type="ChEBI" id="CHEBI:15378"/>
        <dbReference type="ChEBI" id="CHEBI:57618"/>
        <dbReference type="ChEBI" id="CHEBI:58210"/>
        <dbReference type="ChEBI" id="CHEBI:58483"/>
        <dbReference type="ChEBI" id="CHEBI:128753"/>
        <dbReference type="EC" id="1.17.7.3"/>
    </reaction>
</comment>
<comment type="cofactor">
    <cofactor evidence="1">
        <name>[4Fe-4S] cluster</name>
        <dbReference type="ChEBI" id="CHEBI:49883"/>
    </cofactor>
    <text evidence="1">Binds 1 [4Fe-4S] cluster.</text>
</comment>
<comment type="pathway">
    <text evidence="1">Isoprenoid biosynthesis; isopentenyl diphosphate biosynthesis via DXP pathway; isopentenyl diphosphate from 1-deoxy-D-xylulose 5-phosphate: step 5/6.</text>
</comment>
<comment type="similarity">
    <text evidence="1">Belongs to the IspG family.</text>
</comment>
<accession>A7MGV7</accession>
<reference key="1">
    <citation type="journal article" date="2010" name="PLoS ONE">
        <title>Genome sequence of Cronobacter sakazakii BAA-894 and comparative genomic hybridization analysis with other Cronobacter species.</title>
        <authorList>
            <person name="Kucerova E."/>
            <person name="Clifton S.W."/>
            <person name="Xia X.Q."/>
            <person name="Long F."/>
            <person name="Porwollik S."/>
            <person name="Fulton L."/>
            <person name="Fronick C."/>
            <person name="Minx P."/>
            <person name="Kyung K."/>
            <person name="Warren W."/>
            <person name="Fulton R."/>
            <person name="Feng D."/>
            <person name="Wollam A."/>
            <person name="Shah N."/>
            <person name="Bhonagiri V."/>
            <person name="Nash W.E."/>
            <person name="Hallsworth-Pepin K."/>
            <person name="Wilson R.K."/>
            <person name="McClelland M."/>
            <person name="Forsythe S.J."/>
        </authorList>
    </citation>
    <scope>NUCLEOTIDE SEQUENCE [LARGE SCALE GENOMIC DNA]</scope>
    <source>
        <strain>ATCC BAA-894</strain>
    </source>
</reference>
<dbReference type="EC" id="1.17.7.3" evidence="1"/>
<dbReference type="EMBL" id="CP000783">
    <property type="protein sequence ID" value="ABU76022.1"/>
    <property type="molecule type" value="Genomic_DNA"/>
</dbReference>
<dbReference type="RefSeq" id="WP_004386976.1">
    <property type="nucleotide sequence ID" value="NC_009778.1"/>
</dbReference>
<dbReference type="SMR" id="A7MGV7"/>
<dbReference type="GeneID" id="56729629"/>
<dbReference type="KEGG" id="esa:ESA_00745"/>
<dbReference type="HOGENOM" id="CLU_042258_0_0_6"/>
<dbReference type="UniPathway" id="UPA00056">
    <property type="reaction ID" value="UER00096"/>
</dbReference>
<dbReference type="Proteomes" id="UP000000260">
    <property type="component" value="Chromosome"/>
</dbReference>
<dbReference type="GO" id="GO:0051539">
    <property type="term" value="F:4 iron, 4 sulfur cluster binding"/>
    <property type="evidence" value="ECO:0007669"/>
    <property type="project" value="UniProtKB-UniRule"/>
</dbReference>
<dbReference type="GO" id="GO:0046429">
    <property type="term" value="F:4-hydroxy-3-methylbut-2-en-1-yl diphosphate synthase activity (ferredoxin)"/>
    <property type="evidence" value="ECO:0007669"/>
    <property type="project" value="UniProtKB-UniRule"/>
</dbReference>
<dbReference type="GO" id="GO:0141197">
    <property type="term" value="F:4-hydroxy-3-methylbut-2-enyl-diphosphate synthase activity (flavodoxin)"/>
    <property type="evidence" value="ECO:0007669"/>
    <property type="project" value="UniProtKB-EC"/>
</dbReference>
<dbReference type="GO" id="GO:0005506">
    <property type="term" value="F:iron ion binding"/>
    <property type="evidence" value="ECO:0007669"/>
    <property type="project" value="InterPro"/>
</dbReference>
<dbReference type="GO" id="GO:0019288">
    <property type="term" value="P:isopentenyl diphosphate biosynthetic process, methylerythritol 4-phosphate pathway"/>
    <property type="evidence" value="ECO:0007669"/>
    <property type="project" value="UniProtKB-UniRule"/>
</dbReference>
<dbReference type="GO" id="GO:0016114">
    <property type="term" value="P:terpenoid biosynthetic process"/>
    <property type="evidence" value="ECO:0007669"/>
    <property type="project" value="InterPro"/>
</dbReference>
<dbReference type="FunFam" id="3.20.20.20:FF:000001">
    <property type="entry name" value="4-hydroxy-3-methylbut-2-en-1-yl diphosphate synthase (flavodoxin)"/>
    <property type="match status" value="1"/>
</dbReference>
<dbReference type="FunFam" id="3.30.413.10:FF:000002">
    <property type="entry name" value="4-hydroxy-3-methylbut-2-en-1-yl diphosphate synthase (flavodoxin)"/>
    <property type="match status" value="1"/>
</dbReference>
<dbReference type="Gene3D" id="3.20.20.20">
    <property type="entry name" value="Dihydropteroate synthase-like"/>
    <property type="match status" value="1"/>
</dbReference>
<dbReference type="Gene3D" id="3.30.413.10">
    <property type="entry name" value="Sulfite Reductase Hemoprotein, domain 1"/>
    <property type="match status" value="1"/>
</dbReference>
<dbReference type="HAMAP" id="MF_00159">
    <property type="entry name" value="IspG"/>
    <property type="match status" value="1"/>
</dbReference>
<dbReference type="InterPro" id="IPR011005">
    <property type="entry name" value="Dihydropteroate_synth-like_sf"/>
</dbReference>
<dbReference type="InterPro" id="IPR016425">
    <property type="entry name" value="IspG_bac"/>
</dbReference>
<dbReference type="InterPro" id="IPR004588">
    <property type="entry name" value="IspG_bac-typ"/>
</dbReference>
<dbReference type="InterPro" id="IPR045854">
    <property type="entry name" value="NO2/SO3_Rdtase_4Fe4S_sf"/>
</dbReference>
<dbReference type="NCBIfam" id="TIGR00612">
    <property type="entry name" value="ispG_gcpE"/>
    <property type="match status" value="1"/>
</dbReference>
<dbReference type="NCBIfam" id="NF001540">
    <property type="entry name" value="PRK00366.1"/>
    <property type="match status" value="1"/>
</dbReference>
<dbReference type="PANTHER" id="PTHR30454">
    <property type="entry name" value="4-HYDROXY-3-METHYLBUT-2-EN-1-YL DIPHOSPHATE SYNTHASE"/>
    <property type="match status" value="1"/>
</dbReference>
<dbReference type="PANTHER" id="PTHR30454:SF0">
    <property type="entry name" value="4-HYDROXY-3-METHYLBUT-2-EN-1-YL DIPHOSPHATE SYNTHASE (FERREDOXIN), CHLOROPLASTIC"/>
    <property type="match status" value="1"/>
</dbReference>
<dbReference type="Pfam" id="PF04551">
    <property type="entry name" value="GcpE"/>
    <property type="match status" value="1"/>
</dbReference>
<dbReference type="PIRSF" id="PIRSF004640">
    <property type="entry name" value="IspG"/>
    <property type="match status" value="1"/>
</dbReference>
<dbReference type="SUPFAM" id="SSF51717">
    <property type="entry name" value="Dihydropteroate synthetase-like"/>
    <property type="match status" value="1"/>
</dbReference>
<dbReference type="SUPFAM" id="SSF56014">
    <property type="entry name" value="Nitrite and sulphite reductase 4Fe-4S domain-like"/>
    <property type="match status" value="1"/>
</dbReference>
<keyword id="KW-0004">4Fe-4S</keyword>
<keyword id="KW-0408">Iron</keyword>
<keyword id="KW-0411">Iron-sulfur</keyword>
<keyword id="KW-0414">Isoprene biosynthesis</keyword>
<keyword id="KW-0479">Metal-binding</keyword>
<keyword id="KW-0560">Oxidoreductase</keyword>
<keyword id="KW-1185">Reference proteome</keyword>
<proteinExistence type="inferred from homology"/>
<name>ISPG_CROS8</name>
<gene>
    <name evidence="1" type="primary">ispG</name>
    <name type="ordered locus">ESA_00745</name>
</gene>
<protein>
    <recommendedName>
        <fullName evidence="1">4-hydroxy-3-methylbut-2-en-1-yl diphosphate synthase (flavodoxin)</fullName>
        <ecNumber evidence="1">1.17.7.3</ecNumber>
    </recommendedName>
    <alternativeName>
        <fullName evidence="1">1-hydroxy-2-methyl-2-(E)-butenyl 4-diphosphate synthase</fullName>
    </alternativeName>
</protein>
<sequence length="372" mass="40707">MHNEAPIQRRKSKRIYVGNVPIGDGAPIAVQSMTNTRTTDVEATVNQIKALERVGADIVRVSVPTMDAAEAFRLIKQQVSVPLVADIHFDYRIALKVAEYGVDCLRINPGNIGNEERIRTVVDCARDKNIPIRIGVNAGSLEKDLQEKYGEPTPQALLESAMRHVDHLDRLNFDQFKVSVKASDVFLAVESYRLLAKQIDQPLHLGITEAGGARAGAVKSAIGLGLLLSEGIGDTLRVSLAADPVEEIKVGFDILKSLRIRSRGINFIACPTCSRQEFDVIGTVNALEQRLEDIITPMDVSIIGCVVNGPGEALVSTLGVTGGNKKSGFYEEGVRKDRLDNDDMITQLEARIRAKASMLDESRRISVQQLEK</sequence>